<comment type="function">
    <text evidence="6 7 8 9 10 12 14 15 18">Lymphocyte activation gene 3 protein: Inhibitory receptor on antigen activated T-cells (PubMed:12209638, PubMed:12421911, PubMed:12672063, PubMed:15100286, PubMed:15634887, PubMed:30580966). Delivers inhibitory signals upon binding to ligands, such as FGL1 (PubMed:30580966). FGL1 constitutes a major ligand of LAG3 and is responsible for LAG3 T-cell inhibitory function (PubMed:30580966). Following TCR engagement, LAG3 associates with CD3-TCR in the immunological synapse and directly inhibits T-cell activation (PubMed:12209638, PubMed:12421911, PubMed:12672063, PubMed:15100286, PubMed:15634887). May inhibit antigen-specific T-cell activation in synergy with PDCD1/PD-1, possibly by acting as a coreceptor for PDCD1/PD-1 (PubMed:21300912). Negatively regulates the proliferation, activation, effector function and homeostasis of both CD8(+) and CD4(+) T-cells (PubMed:12209638, PubMed:12421911, PubMed:12672063, PubMed:15100286, PubMed:15634887). Also mediates immune tolerance: constitutively expressed on a subset of regulatory T-cells (Tregs) and contributes to their suppressive function (PubMed:15485628). Also acts as a negative regulator of plasmacytoid dendritic cell (pDCs) activation (PubMed:19201841). Binds MHC class II (MHC-II); the precise role of MHC-II-binding is however unclear (PubMed:12209638, PubMed:12421911, PubMed:15634887).</text>
</comment>
<comment type="function">
    <molecule>Secreted lymphocyte activation gene 3 protein</molecule>
    <text evidence="5">May function as a ligand for MHC class II (MHC-II) on antigen-presenting cells (APC), promoting APC activation/maturation and driving Th1 immune response.</text>
</comment>
<comment type="subunit">
    <text evidence="6 7 17 18">Interacts with MHC class II (MHC-II); selectively recognizes stable complexes of peptide and MHC-II (PubMed:12209638, PubMed:12421911, PubMed:30349037). Interacts with FGL1 (via the Fibrinogen C-terminal domain) (PubMed:30580966).</text>
</comment>
<comment type="interaction">
    <interactant intactId="EBI-34579204">
        <id>Q61790</id>
    </interactant>
    <interactant intactId="EBI-34579174">
        <id>Q71KU9</id>
        <label>Fgl1</label>
    </interactant>
    <organismsDiffer>false</organismsDiffer>
    <experiments>3</experiments>
</comment>
<comment type="interaction">
    <interactant intactId="EBI-34579204">
        <id>Q61790</id>
    </interactant>
    <interactant intactId="EBI-3934830">
        <id>Q08830</id>
        <label>FGL1</label>
    </interactant>
    <organismsDiffer>true</organismsDiffer>
    <experiments>2</experiments>
</comment>
<comment type="subcellular location">
    <molecule>Lymphocyte activation gene 3 protein</molecule>
    <subcellularLocation>
        <location evidence="19">Cell membrane</location>
        <topology evidence="2">Single-pass type I membrane protein</topology>
    </subcellularLocation>
</comment>
<comment type="subcellular location">
    <molecule>Secreted lymphocyte activation gene 3 protein</molecule>
    <subcellularLocation>
        <location evidence="11 13">Secreted</location>
    </subcellularLocation>
    <text evidence="13">Produced following cleavage of the main chain.</text>
</comment>
<comment type="tissue specificity">
    <text evidence="6 10 14">Primarily expressed in activated CD4(+) and CD8(+) T-cells (PubMed:12209638). Also expressed in a subset of regulatory T-cells (Tregs), such as natural CD4(+)CD25(+) Tregs (PubMed:15485628). Also expressed on plasmacytoid dendritic cells (pDCs) (PubMed:19201841).</text>
</comment>
<comment type="domain">
    <molecule>Lymphocyte activation gene 3 protein</molecule>
    <text evidence="7 8">The KIEELE motif is required for interaction with downstream signaling molecules.</text>
</comment>
<comment type="PTM">
    <molecule>Lymphocyte activation gene 3 protein</molecule>
    <text evidence="13">Proteolytically cleaved by ADAM10 and ADAM17 within the connecting peptide region, leading to release of Secreted lymphocyte activation gene 3 protein (sLAG-3) (PubMed:17245433). ADAM10 mediates constitutive cleavage, but cleavage increases following T-cell activation, whereas shedding by ADAM17 is induced by TCR signaling in a PRKCQ-dependent manner (PubMed:17245433).</text>
</comment>
<comment type="disruption phenotype">
    <text evidence="9 15 16 19">Mice develop normally but show minor defects in the natural killer (NK) cells (PubMed:8602528). They are however prone to development of autoimmune diseases, such as autoimmune diabetes on a permissive genetic background (PubMed:21300912, PubMed:21873518). Knockout NOD mice exhibit accelerated, invasive insulitis, corresponding to increased CD4(+) and CD8(+) T-cell islet infiltration and intraislet proliferation (PubMed:21873518). T-cells display a delay in cell cycle arrest following stimulation with the superantigen staphylococcal enterotoxin-B resulting in increased T-cell expansion and splenomegaly (PubMed:15100286). Mice lacking both Lag3 and Pdcd1/PD-1 die of severe myocarditis before 10 weeks of age in BALB/c mice (PubMed:21300912).</text>
</comment>
<comment type="similarity">
    <text evidence="25">Belongs to the LAG3 family.</text>
</comment>
<comment type="caution">
    <text evidence="16 19">An initial knockout experiment in mouse reported only minor phenotype with no development of spontaneous disease, arguing against a significant role in controlling T-cell activation (PubMed:8602528). However, subsequent analysis showed that knockout mice develop autoimmune diseases caused by T-cell activation (PubMed:21873518).</text>
</comment>
<gene>
    <name evidence="27" type="primary">Lag3</name>
</gene>
<name>LAG3_MOUSE</name>
<sequence length="521" mass="56978">MREDLLLGFLLLGLLWEAPVVSSGPGKELPVVWAQEGAPVHLPCSLKSPNLDPNFLRRGGVIWQHQPDSGQPTPIPALDLHQGMPSPRQPAPGRYTVLSVAPGGLRSGRQPLHPHVQLEERGLQRGDFSLWLRPALRTDAGEYHATVRLPNRALSCSLRLRVGQASMIASPSGVLKLSDWVLLNCSFSRPDRPVSVHWFQGQNRVPVYNSPRHFLAETFLLLPQVSPLDSGTWGCVLTYRDGFNVSITYNLKVLGLEPVAPLTVYAAEGSRVELPCHLPPGVGTPSLLIAKWTPPGGGPELPVAGKSGNFTLHLEAVGLAQAGTYTCSIHLQGQQLNATVTLAVITVTPKSFGLPGSRGKLLCEVTPASGKERFVWRPLNNLSRSCPGPVLEIQEARLLAERWQCQLYEGQRLLGATVYAAESSSGAHSARRISGDLKGGHLVLVLILGALSLFLLVAGAFGFHWWRKQLLLRRFSALEHGIQPFPAQRKIEELERELETEMGQEPEPEPEPQLEPEPRQL</sequence>
<proteinExistence type="evidence at protein level"/>
<accession>Q61790</accession>
<accession>Q0VBL2</accession>
<organism>
    <name type="scientific">Mus musculus</name>
    <name type="common">Mouse</name>
    <dbReference type="NCBI Taxonomy" id="10090"/>
    <lineage>
        <taxon>Eukaryota</taxon>
        <taxon>Metazoa</taxon>
        <taxon>Chordata</taxon>
        <taxon>Craniata</taxon>
        <taxon>Vertebrata</taxon>
        <taxon>Euteleostomi</taxon>
        <taxon>Mammalia</taxon>
        <taxon>Eutheria</taxon>
        <taxon>Euarchontoglires</taxon>
        <taxon>Glires</taxon>
        <taxon>Rodentia</taxon>
        <taxon>Myomorpha</taxon>
        <taxon>Muroidea</taxon>
        <taxon>Muridae</taxon>
        <taxon>Murinae</taxon>
        <taxon>Mus</taxon>
        <taxon>Mus</taxon>
    </lineage>
</organism>
<feature type="signal peptide" evidence="2">
    <location>
        <begin position="1"/>
        <end position="23"/>
    </location>
</feature>
<feature type="chain" id="PRO_0000014632" description="Lymphocyte activation gene 3 protein">
    <location>
        <begin position="24"/>
        <end position="521"/>
    </location>
</feature>
<feature type="chain" id="PRO_0000446643" description="Secreted lymphocyte activation gene 3 protein" evidence="26">
    <location>
        <begin position="24"/>
        <end position="422"/>
    </location>
</feature>
<feature type="topological domain" description="Extracellular" evidence="2">
    <location>
        <begin position="24"/>
        <end position="442"/>
    </location>
</feature>
<feature type="transmembrane region" description="Helical" evidence="2">
    <location>
        <begin position="443"/>
        <end position="463"/>
    </location>
</feature>
<feature type="topological domain" description="Cytoplasmic" evidence="2">
    <location>
        <begin position="464"/>
        <end position="521"/>
    </location>
</feature>
<feature type="domain" description="Ig-like V-type" evidence="2">
    <location>
        <begin position="37"/>
        <end position="163"/>
    </location>
</feature>
<feature type="domain" description="Ig-like C2-type 1" evidence="2">
    <location>
        <begin position="165"/>
        <end position="246"/>
    </location>
</feature>
<feature type="domain" description="Ig-like C2-type 2" evidence="2">
    <location>
        <begin position="258"/>
        <end position="341"/>
    </location>
</feature>
<feature type="domain" description="Ig-like C2-type 3" evidence="2">
    <location>
        <begin position="345"/>
        <end position="412"/>
    </location>
</feature>
<feature type="region of interest" description="Interaction with FGL1" evidence="1">
    <location>
        <begin position="37"/>
        <end position="246"/>
    </location>
</feature>
<feature type="region of interest" description="Connecting peptide" evidence="26">
    <location>
        <begin position="422"/>
        <end position="442"/>
    </location>
</feature>
<feature type="region of interest" description="Disordered" evidence="4">
    <location>
        <begin position="493"/>
        <end position="521"/>
    </location>
</feature>
<feature type="region of interest" description="13 X 2 AA tandem repeats of E-X">
    <location>
        <begin position="493"/>
        <end position="518"/>
    </location>
</feature>
<feature type="short sequence motif" description="KIEELE motif" evidence="7">
    <location>
        <begin position="490"/>
        <end position="495"/>
    </location>
</feature>
<feature type="compositionally biased region" description="Acidic residues" evidence="4">
    <location>
        <begin position="500"/>
        <end position="514"/>
    </location>
</feature>
<feature type="glycosylation site" description="N-linked (GlcNAc...) asparagine" evidence="2">
    <location>
        <position position="184"/>
    </location>
</feature>
<feature type="glycosylation site" description="N-linked (GlcNAc...) asparagine" evidence="2">
    <location>
        <position position="244"/>
    </location>
</feature>
<feature type="glycosylation site" description="N-linked (GlcNAc...) asparagine" evidence="2">
    <location>
        <position position="309"/>
    </location>
</feature>
<feature type="glycosylation site" description="N-linked (GlcNAc...) asparagine" evidence="2">
    <location>
        <position position="337"/>
    </location>
</feature>
<feature type="glycosylation site" description="N-linked (GlcNAc...) asparagine" evidence="2">
    <location>
        <position position="381"/>
    </location>
</feature>
<feature type="disulfide bond" evidence="3">
    <location>
        <begin position="44"/>
        <end position="156"/>
    </location>
</feature>
<feature type="disulfide bond" evidence="3">
    <location>
        <begin position="185"/>
        <end position="235"/>
    </location>
</feature>
<feature type="disulfide bond" evidence="3">
    <location>
        <begin position="276"/>
        <end position="327"/>
    </location>
</feature>
<feature type="disulfide bond" evidence="3">
    <location>
        <begin position="363"/>
        <end position="405"/>
    </location>
</feature>
<feature type="mutagenesis site" description="Decreased binding to MHC class II." evidence="7">
    <original>R</original>
    <variation>E</variation>
    <location>
        <position position="94"/>
    </location>
</feature>
<feature type="mutagenesis site" description="No significant effect on MHC class II-binding." evidence="7">
    <original>Y</original>
    <variation>F</variation>
    <location>
        <position position="95"/>
    </location>
</feature>
<feature type="mutagenesis site" description="No significant effect on MHC class II-binding." evidence="7">
    <original>R</original>
    <variation>A</variation>
    <location>
        <position position="121"/>
    </location>
</feature>
<feature type="mutagenesis site" description="Abolished ability to inhibit T-cell activation." evidence="7">
    <original>K</original>
    <variation>A</variation>
    <location>
        <position position="490"/>
    </location>
</feature>
<feature type="strand" evidence="28">
    <location>
        <begin position="31"/>
        <end position="35"/>
    </location>
</feature>
<feature type="strand" evidence="28">
    <location>
        <begin position="40"/>
        <end position="42"/>
    </location>
</feature>
<feature type="helix" evidence="28">
    <location>
        <begin position="53"/>
        <end position="56"/>
    </location>
</feature>
<feature type="strand" evidence="28">
    <location>
        <begin position="60"/>
        <end position="67"/>
    </location>
</feature>
<feature type="strand" evidence="28">
    <location>
        <begin position="95"/>
        <end position="100"/>
    </location>
</feature>
<feature type="strand" evidence="28">
    <location>
        <begin position="110"/>
        <end position="113"/>
    </location>
</feature>
<feature type="helix" evidence="28">
    <location>
        <begin position="120"/>
        <end position="124"/>
    </location>
</feature>
<feature type="strand" evidence="28">
    <location>
        <begin position="130"/>
        <end position="134"/>
    </location>
</feature>
<feature type="helix" evidence="28">
    <location>
        <begin position="137"/>
        <end position="139"/>
    </location>
</feature>
<feature type="strand" evidence="28">
    <location>
        <begin position="141"/>
        <end position="148"/>
    </location>
</feature>
<feature type="strand" evidence="28">
    <location>
        <begin position="153"/>
        <end position="163"/>
    </location>
</feature>
<feature type="strand" evidence="28">
    <location>
        <begin position="165"/>
        <end position="171"/>
    </location>
</feature>
<feature type="strand" evidence="28">
    <location>
        <begin position="181"/>
        <end position="187"/>
    </location>
</feature>
<feature type="strand" evidence="28">
    <location>
        <begin position="194"/>
        <end position="200"/>
    </location>
</feature>
<feature type="turn" evidence="28">
    <location>
        <begin position="201"/>
        <end position="204"/>
    </location>
</feature>
<feature type="strand" evidence="28">
    <location>
        <begin position="205"/>
        <end position="207"/>
    </location>
</feature>
<feature type="strand" evidence="28">
    <location>
        <begin position="213"/>
        <end position="216"/>
    </location>
</feature>
<feature type="strand" evidence="28">
    <location>
        <begin position="219"/>
        <end position="224"/>
    </location>
</feature>
<feature type="helix" evidence="28">
    <location>
        <begin position="227"/>
        <end position="229"/>
    </location>
</feature>
<feature type="strand" evidence="28">
    <location>
        <begin position="231"/>
        <end position="238"/>
    </location>
</feature>
<feature type="strand" evidence="28">
    <location>
        <begin position="244"/>
        <end position="251"/>
    </location>
</feature>
<evidence type="ECO:0000250" key="1">
    <source>
        <dbReference type="UniProtKB" id="P18627"/>
    </source>
</evidence>
<evidence type="ECO:0000255" key="2"/>
<evidence type="ECO:0000255" key="3">
    <source>
        <dbReference type="PROSITE-ProRule" id="PRU00114"/>
    </source>
</evidence>
<evidence type="ECO:0000256" key="4">
    <source>
        <dbReference type="SAM" id="MobiDB-lite"/>
    </source>
</evidence>
<evidence type="ECO:0000269" key="5">
    <source>
    </source>
</evidence>
<evidence type="ECO:0000269" key="6">
    <source>
    </source>
</evidence>
<evidence type="ECO:0000269" key="7">
    <source>
    </source>
</evidence>
<evidence type="ECO:0000269" key="8">
    <source>
    </source>
</evidence>
<evidence type="ECO:0000269" key="9">
    <source>
    </source>
</evidence>
<evidence type="ECO:0000269" key="10">
    <source>
    </source>
</evidence>
<evidence type="ECO:0000269" key="11">
    <source>
    </source>
</evidence>
<evidence type="ECO:0000269" key="12">
    <source>
    </source>
</evidence>
<evidence type="ECO:0000269" key="13">
    <source>
    </source>
</evidence>
<evidence type="ECO:0000269" key="14">
    <source>
    </source>
</evidence>
<evidence type="ECO:0000269" key="15">
    <source>
    </source>
</evidence>
<evidence type="ECO:0000269" key="16">
    <source>
    </source>
</evidence>
<evidence type="ECO:0000269" key="17">
    <source>
    </source>
</evidence>
<evidence type="ECO:0000269" key="18">
    <source>
    </source>
</evidence>
<evidence type="ECO:0000269" key="19">
    <source>
    </source>
</evidence>
<evidence type="ECO:0000303" key="20">
    <source>
    </source>
</evidence>
<evidence type="ECO:0000303" key="21">
    <source>
    </source>
</evidence>
<evidence type="ECO:0000303" key="22">
    <source>
    </source>
</evidence>
<evidence type="ECO:0000303" key="23">
    <source>
    </source>
</evidence>
<evidence type="ECO:0000303" key="24">
    <source>
    </source>
</evidence>
<evidence type="ECO:0000305" key="25"/>
<evidence type="ECO:0000305" key="26">
    <source>
    </source>
</evidence>
<evidence type="ECO:0000312" key="27">
    <source>
        <dbReference type="MGI" id="MGI:106588"/>
    </source>
</evidence>
<evidence type="ECO:0007829" key="28">
    <source>
        <dbReference type="PDB" id="7TZE"/>
    </source>
</evidence>
<protein>
    <recommendedName>
        <fullName evidence="24">Lymphocyte activation gene 3 protein</fullName>
        <shortName evidence="24">LAG-3</shortName>
    </recommendedName>
    <alternativeName>
        <fullName evidence="23">Activation-induced cytidine deaminase-linked autoimmunity protein</fullName>
        <shortName evidence="23">Aida</shortName>
    </alternativeName>
    <cdAntigenName evidence="20">CD223</cdAntigenName>
    <component>
        <recommendedName>
            <fullName evidence="25">Secreted lymphocyte activation gene 3 protein</fullName>
            <shortName evidence="21 22">sLAG-3</shortName>
        </recommendedName>
    </component>
</protein>
<dbReference type="EMBL" id="X98113">
    <property type="protein sequence ID" value="CAA66794.1"/>
    <property type="molecule type" value="mRNA"/>
</dbReference>
<dbReference type="EMBL" id="BC120591">
    <property type="protein sequence ID" value="AAI20592.1"/>
    <property type="molecule type" value="mRNA"/>
</dbReference>
<dbReference type="CCDS" id="CCDS20536.1"/>
<dbReference type="RefSeq" id="NP_032505.1">
    <property type="nucleotide sequence ID" value="NM_008479.2"/>
</dbReference>
<dbReference type="PDB" id="7TZE">
    <property type="method" value="X-ray"/>
    <property type="resolution" value="2.12 A"/>
    <property type="chains" value="A/C=23-254"/>
</dbReference>
<dbReference type="PDB" id="8DGG">
    <property type="method" value="X-ray"/>
    <property type="resolution" value="3.78 A"/>
    <property type="chains" value="A/B=24-442"/>
</dbReference>
<dbReference type="PDB" id="9CYL">
    <property type="method" value="X-ray"/>
    <property type="resolution" value="4.66 A"/>
    <property type="chains" value="L=23-254"/>
</dbReference>
<dbReference type="PDB" id="9CYM">
    <property type="method" value="X-ray"/>
    <property type="resolution" value="3.84 A"/>
    <property type="chains" value="L=23-255"/>
</dbReference>
<dbReference type="PDBsum" id="7TZE"/>
<dbReference type="PDBsum" id="8DGG"/>
<dbReference type="PDBsum" id="9CYL"/>
<dbReference type="PDBsum" id="9CYM"/>
<dbReference type="SMR" id="Q61790"/>
<dbReference type="FunCoup" id="Q61790">
    <property type="interactions" value="131"/>
</dbReference>
<dbReference type="IntAct" id="Q61790">
    <property type="interactions" value="2"/>
</dbReference>
<dbReference type="STRING" id="10090.ENSMUSP00000032217"/>
<dbReference type="GlyCosmos" id="Q61790">
    <property type="glycosylation" value="5 sites, No reported glycans"/>
</dbReference>
<dbReference type="GlyGen" id="Q61790">
    <property type="glycosylation" value="5 sites"/>
</dbReference>
<dbReference type="iPTMnet" id="Q61790"/>
<dbReference type="PhosphoSitePlus" id="Q61790"/>
<dbReference type="PaxDb" id="10090-ENSMUSP00000032217"/>
<dbReference type="ProteomicsDB" id="264907"/>
<dbReference type="Antibodypedia" id="2267">
    <property type="antibodies" value="1433 antibodies from 40 providers"/>
</dbReference>
<dbReference type="DNASU" id="16768"/>
<dbReference type="Ensembl" id="ENSMUST00000032217.2">
    <property type="protein sequence ID" value="ENSMUSP00000032217.2"/>
    <property type="gene ID" value="ENSMUSG00000030124.3"/>
</dbReference>
<dbReference type="GeneID" id="16768"/>
<dbReference type="KEGG" id="mmu:16768"/>
<dbReference type="UCSC" id="uc009dsl.2">
    <property type="organism name" value="mouse"/>
</dbReference>
<dbReference type="AGR" id="MGI:106588"/>
<dbReference type="CTD" id="3902"/>
<dbReference type="MGI" id="MGI:106588">
    <property type="gene designation" value="Lag3"/>
</dbReference>
<dbReference type="VEuPathDB" id="HostDB:ENSMUSG00000030124"/>
<dbReference type="eggNOG" id="ENOG502S2HD">
    <property type="taxonomic scope" value="Eukaryota"/>
</dbReference>
<dbReference type="GeneTree" id="ENSGT01090000259985"/>
<dbReference type="HOGENOM" id="CLU_041154_1_0_1"/>
<dbReference type="InParanoid" id="Q61790"/>
<dbReference type="OMA" id="LWVAPVE"/>
<dbReference type="OrthoDB" id="9937043at2759"/>
<dbReference type="PhylomeDB" id="Q61790"/>
<dbReference type="TreeFam" id="TF335942"/>
<dbReference type="Reactome" id="R-MMU-2132295">
    <property type="pathway name" value="MHC class II antigen presentation"/>
</dbReference>
<dbReference type="BioGRID-ORCS" id="16768">
    <property type="hits" value="7 hits in 83 CRISPR screens"/>
</dbReference>
<dbReference type="PRO" id="PR:Q61790"/>
<dbReference type="Proteomes" id="UP000000589">
    <property type="component" value="Chromosome 6"/>
</dbReference>
<dbReference type="RNAct" id="Q61790">
    <property type="molecule type" value="protein"/>
</dbReference>
<dbReference type="Bgee" id="ENSMUSG00000030124">
    <property type="expression patterns" value="Expressed in epiblast cell in embryo and 59 other cell types or tissues"/>
</dbReference>
<dbReference type="GO" id="GO:0009897">
    <property type="term" value="C:external side of plasma membrane"/>
    <property type="evidence" value="ECO:0000314"/>
    <property type="project" value="MGI"/>
</dbReference>
<dbReference type="GO" id="GO:0005576">
    <property type="term" value="C:extracellular region"/>
    <property type="evidence" value="ECO:0000314"/>
    <property type="project" value="UniProtKB"/>
</dbReference>
<dbReference type="GO" id="GO:0042289">
    <property type="term" value="F:MHC class II protein binding"/>
    <property type="evidence" value="ECO:0000314"/>
    <property type="project" value="UniProtKB"/>
</dbReference>
<dbReference type="GO" id="GO:0004888">
    <property type="term" value="F:transmembrane signaling receptor activity"/>
    <property type="evidence" value="ECO:0000314"/>
    <property type="project" value="UniProtKB"/>
</dbReference>
<dbReference type="GO" id="GO:0002250">
    <property type="term" value="P:adaptive immune response"/>
    <property type="evidence" value="ECO:0007669"/>
    <property type="project" value="UniProtKB-KW"/>
</dbReference>
<dbReference type="GO" id="GO:0007166">
    <property type="term" value="P:cell surface receptor signaling pathway"/>
    <property type="evidence" value="ECO:0000314"/>
    <property type="project" value="UniProtKB"/>
</dbReference>
<dbReference type="GO" id="GO:0042267">
    <property type="term" value="P:natural killer cell mediated cytotoxicity"/>
    <property type="evidence" value="ECO:0000314"/>
    <property type="project" value="MGI"/>
</dbReference>
<dbReference type="GO" id="GO:0032703">
    <property type="term" value="P:negative regulation of interleukin-2 production"/>
    <property type="evidence" value="ECO:0000314"/>
    <property type="project" value="MGI"/>
</dbReference>
<dbReference type="GO" id="GO:0045590">
    <property type="term" value="P:negative regulation of regulatory T cell differentiation"/>
    <property type="evidence" value="ECO:0000315"/>
    <property type="project" value="UniProtKB"/>
</dbReference>
<dbReference type="GO" id="GO:0050868">
    <property type="term" value="P:negative regulation of T cell activation"/>
    <property type="evidence" value="ECO:0000314"/>
    <property type="project" value="UniProtKB"/>
</dbReference>
<dbReference type="GO" id="GO:0002270">
    <property type="term" value="P:plasmacytoid dendritic cell activation"/>
    <property type="evidence" value="ECO:0000315"/>
    <property type="project" value="UniProtKB"/>
</dbReference>
<dbReference type="GO" id="GO:0045954">
    <property type="term" value="P:positive regulation of natural killer cell mediated cytotoxicity"/>
    <property type="evidence" value="ECO:0000314"/>
    <property type="project" value="MGI"/>
</dbReference>
<dbReference type="GO" id="GO:0050776">
    <property type="term" value="P:regulation of immune response"/>
    <property type="evidence" value="ECO:0000314"/>
    <property type="project" value="UniProtKB"/>
</dbReference>
<dbReference type="GO" id="GO:0042110">
    <property type="term" value="P:T cell activation"/>
    <property type="evidence" value="ECO:0000314"/>
    <property type="project" value="MGI"/>
</dbReference>
<dbReference type="CDD" id="cd00096">
    <property type="entry name" value="Ig"/>
    <property type="match status" value="1"/>
</dbReference>
<dbReference type="FunFam" id="2.60.40.10:FF:002440">
    <property type="entry name" value="Lymphocyte activation gene 3 protein"/>
    <property type="match status" value="1"/>
</dbReference>
<dbReference type="FunFam" id="2.60.40.10:FF:002804">
    <property type="entry name" value="lymphocyte activation gene 3 protein"/>
    <property type="match status" value="1"/>
</dbReference>
<dbReference type="Gene3D" id="2.60.40.10">
    <property type="entry name" value="Immunoglobulins"/>
    <property type="match status" value="3"/>
</dbReference>
<dbReference type="InterPro" id="IPR007110">
    <property type="entry name" value="Ig-like_dom"/>
</dbReference>
<dbReference type="InterPro" id="IPR036179">
    <property type="entry name" value="Ig-like_dom_sf"/>
</dbReference>
<dbReference type="InterPro" id="IPR013783">
    <property type="entry name" value="Ig-like_fold"/>
</dbReference>
<dbReference type="InterPro" id="IPR003599">
    <property type="entry name" value="Ig_sub"/>
</dbReference>
<dbReference type="InterPro" id="IPR015621">
    <property type="entry name" value="IL-1_rcpt_fam"/>
</dbReference>
<dbReference type="PANTHER" id="PTHR11890">
    <property type="entry name" value="INTERLEUKIN-1 RECEPTOR FAMILY MEMBER"/>
    <property type="match status" value="1"/>
</dbReference>
<dbReference type="PANTHER" id="PTHR11890:SF18">
    <property type="entry name" value="LYMPHOCYTE ACTIVATION GENE 3 PROTEIN"/>
    <property type="match status" value="1"/>
</dbReference>
<dbReference type="SMART" id="SM00409">
    <property type="entry name" value="IG"/>
    <property type="match status" value="3"/>
</dbReference>
<dbReference type="SUPFAM" id="SSF48726">
    <property type="entry name" value="Immunoglobulin"/>
    <property type="match status" value="3"/>
</dbReference>
<dbReference type="PROSITE" id="PS50835">
    <property type="entry name" value="IG_LIKE"/>
    <property type="match status" value="2"/>
</dbReference>
<reference key="1">
    <citation type="journal article" date="1996" name="Anal. Biochem.">
        <title>Cloning of murine LAG-3 by magnetic bead bound homologous probes and PCR (gene-capture PCR).</title>
        <authorList>
            <person name="Mastrangeli R."/>
            <person name="Micangeli E."/>
            <person name="Donini S."/>
        </authorList>
    </citation>
    <scope>NUCLEOTIDE SEQUENCE [MRNA]</scope>
    <source>
        <strain>BALB/cJ</strain>
        <tissue>Thymus</tissue>
    </source>
</reference>
<reference key="2">
    <citation type="journal article" date="1996" name="Science">
        <title>Independent modes of natural killing distinguished in mice lacking Lag3.</title>
        <authorList>
            <person name="Miyazaki T."/>
            <person name="Dierich A."/>
            <person name="Benoist C."/>
            <person name="Mathis D."/>
        </authorList>
    </citation>
    <scope>NUCLEOTIDE SEQUENCE [MRNA]</scope>
    <scope>SUBCELLULAR LOCATION</scope>
    <scope>DISRUPTION PHENOTYPE</scope>
    <source>
        <strain>BALB/cJ</strain>
        <tissue>Thymus</tissue>
    </source>
</reference>
<reference key="3">
    <citation type="journal article" date="2004" name="Genome Res.">
        <title>The status, quality, and expansion of the NIH full-length cDNA project: the Mammalian Gene Collection (MGC).</title>
        <authorList>
            <consortium name="The MGC Project Team"/>
        </authorList>
    </citation>
    <scope>NUCLEOTIDE SEQUENCE [LARGE SCALE MRNA]</scope>
    <source>
        <tissue>Brain</tissue>
    </source>
</reference>
<reference key="4">
    <citation type="journal article" date="2002" name="Eur. J. Immunol.">
        <title>Phenotypic analysis of the murine CD4-related glycoprotein, CD223 (LAG-3).</title>
        <authorList>
            <person name="Workman C.J."/>
            <person name="Rice D.S."/>
            <person name="Dugger K.J."/>
            <person name="Kurschner C."/>
            <person name="Vignali D.A."/>
        </authorList>
    </citation>
    <scope>FUNCTION</scope>
    <scope>TISSUE SPECIFICITY</scope>
    <scope>INTERACTION WITH MHC-II</scope>
</reference>
<reference key="5">
    <citation type="journal article" date="2002" name="J. Immunol.">
        <title>Maturation and activation of dendritic cells induced by lymphocyte activation gene-3 (CD223).</title>
        <authorList>
            <person name="Andreae S."/>
            <person name="Piras F."/>
            <person name="Burdin N."/>
            <person name="Triebel F."/>
        </authorList>
    </citation>
    <scope>FUNCTION (SECRETED LYMPHOCYTE ACTIVATION GENE 3 PROTEIN)</scope>
</reference>
<reference key="6">
    <citation type="journal article" date="2002" name="J. Immunol.">
        <title>Molecular analysis of the negative regulatory function of lymphocyte activation gene-3.</title>
        <authorList>
            <person name="Workman C.J."/>
            <person name="Dugger K.J."/>
            <person name="Vignali D.A."/>
        </authorList>
    </citation>
    <scope>FUNCTION</scope>
    <scope>INTERACTION WITH MHC-II</scope>
    <scope>DOMAIN</scope>
    <scope>MUTAGENESIS OF ARG-94; TYR-95; ARG-121 AND LYS-490</scope>
</reference>
<reference key="7">
    <citation type="journal article" date="2003" name="Eur. J. Immunol.">
        <title>The CD4-related molecule, LAG-3 (CD223), regulates the expansion of activated T cells.</title>
        <authorList>
            <person name="Workman C.J."/>
            <person name="Vignali D.A."/>
        </authorList>
    </citation>
    <scope>FUNCTION</scope>
    <scope>DOMAIN</scope>
</reference>
<reference key="8">
    <citation type="journal article" date="2004" name="Immunity">
        <title>Role of LAG-3 in regulatory T cells.</title>
        <authorList>
            <person name="Huang C.T."/>
            <person name="Workman C.J."/>
            <person name="Flies D."/>
            <person name="Pan X."/>
            <person name="Marson A.L."/>
            <person name="Zhou G."/>
            <person name="Hipkiss E.L."/>
            <person name="Ravi S."/>
            <person name="Kowalski J."/>
            <person name="Levitsky H.I."/>
            <person name="Powell J.D."/>
            <person name="Pardoll D.M."/>
            <person name="Drake C.G."/>
            <person name="Vignali D.A."/>
        </authorList>
    </citation>
    <scope>FUNCTION</scope>
    <scope>TISSUE SPECIFICITY</scope>
</reference>
<reference key="9">
    <citation type="journal article" date="2004" name="J. Immunol.">
        <title>Lymphocyte activation gene-3 (CD223) regulates the size of the expanding T cell population following antigen activation in vivo.</title>
        <authorList>
            <person name="Workman C.J."/>
            <person name="Cauley L.S."/>
            <person name="Kim I.J."/>
            <person name="Blackman M.A."/>
            <person name="Woodland D.L."/>
            <person name="Vignali D.A."/>
        </authorList>
    </citation>
    <scope>FUNCTION</scope>
    <scope>DISRUPTION PHENOTYPE</scope>
</reference>
<reference key="10">
    <citation type="journal article" date="2004" name="J. Immunol.">
        <title>Biochemical analysis of the regulatory T cell protein lymphocyte activation gene-3 (LAG-3; CD223).</title>
        <authorList>
            <person name="Li N."/>
            <person name="Workman C.J."/>
            <person name="Martin S.M."/>
            <person name="Vignali D.A."/>
        </authorList>
    </citation>
    <scope>PROTEOLYTIC CLEAVAGE</scope>
    <scope>SUBCELLULAR LOCATION (SECRETED LYMPHOCYTE ACTIVATION GENE 3 PROTEIN)</scope>
</reference>
<reference key="11">
    <citation type="journal article" date="2005" name="J. Immunol.">
        <title>Negative regulation of T cell homeostasis by lymphocyte activation gene-3 (CD223).</title>
        <authorList>
            <person name="Workman C.J."/>
            <person name="Vignali D.A."/>
        </authorList>
    </citation>
    <scope>FUNCTION</scope>
</reference>
<reference key="12">
    <citation type="journal article" date="2007" name="EMBO J.">
        <title>Metalloproteases regulate T-cell proliferation and effector function via LAG-3.</title>
        <authorList>
            <person name="Li N."/>
            <person name="Wang Y."/>
            <person name="Forbes K."/>
            <person name="Vignali K.M."/>
            <person name="Heale B.S."/>
            <person name="Saftig P."/>
            <person name="Hartmann D."/>
            <person name="Black R.A."/>
            <person name="Rossi J.J."/>
            <person name="Blobel C.P."/>
            <person name="Dempsey P.J."/>
            <person name="Workman C.J."/>
            <person name="Vignali D.A."/>
        </authorList>
    </citation>
    <scope>PROTEOLYTIC CLEAVAGE</scope>
    <scope>SUBCELLULAR LOCATION (SECRETED LYMPHOCYTE ACTIVATION GENE 3 PROTEIN)</scope>
</reference>
<reference key="13">
    <citation type="journal article" date="2009" name="J. Immunol.">
        <title>LAG-3 regulates plasmacytoid dendritic cell homeostasis.</title>
        <authorList>
            <person name="Workman C.J."/>
            <person name="Wang Y."/>
            <person name="El Kasmi K.C."/>
            <person name="Pardoll D.M."/>
            <person name="Murray P.J."/>
            <person name="Drake C.G."/>
            <person name="Vignali D.A."/>
        </authorList>
    </citation>
    <scope>FUNCTION</scope>
    <scope>TISSUE SPECIFICITY</scope>
</reference>
<reference key="14">
    <citation type="journal article" date="2011" name="J. Exp. Med.">
        <title>PD-1 and LAG-3 inhibitory co-receptors act synergistically to prevent autoimmunity in mice.</title>
        <authorList>
            <person name="Okazaki T."/>
            <person name="Okazaki I.M."/>
            <person name="Wang J."/>
            <person name="Sugiura D."/>
            <person name="Nakaki F."/>
            <person name="Yoshida T."/>
            <person name="Kato Y."/>
            <person name="Fagarasan S."/>
            <person name="Muramatsu M."/>
            <person name="Eto T."/>
            <person name="Hioki K."/>
            <person name="Honjo T."/>
        </authorList>
    </citation>
    <scope>FUNCTION</scope>
    <scope>DISRUPTION PHENOTYPE</scope>
</reference>
<reference key="15">
    <citation type="journal article" date="2011" name="J. Immunol.">
        <title>Accelerated autoimmune diabetes in the absence of LAG-3.</title>
        <authorList>
            <person name="Bettini M."/>
            <person name="Szymczak-Workman A.L."/>
            <person name="Forbes K."/>
            <person name="Castellaw A.H."/>
            <person name="Selby M."/>
            <person name="Pan X."/>
            <person name="Drake C.G."/>
            <person name="Korman A.J."/>
            <person name="Vignali D.A."/>
        </authorList>
    </citation>
    <scope>DISRUPTION PHENOTYPE</scope>
</reference>
<reference key="16">
    <citation type="journal article" date="2018" name="Cell">
        <title>Fibrinogen-like protein 1 is a major immune inhibitory ligand of LAG-3.</title>
        <authorList>
            <person name="Wang J."/>
            <person name="Sanmamed M.F."/>
            <person name="Datar I."/>
            <person name="Su T.T."/>
            <person name="Ji L."/>
            <person name="Sun J."/>
            <person name="Chen L."/>
            <person name="Chen Y."/>
            <person name="Zhu G."/>
            <person name="Yin W."/>
            <person name="Zheng L."/>
            <person name="Zhou T."/>
            <person name="Badri T."/>
            <person name="Yao S."/>
            <person name="Zhu S."/>
            <person name="Boto A."/>
            <person name="Sznol M."/>
            <person name="Melero I."/>
            <person name="Vignali D.A.A."/>
            <person name="Schalper K."/>
            <person name="Chen L."/>
        </authorList>
    </citation>
    <scope>FUNCTION</scope>
    <scope>INTERACTION WITH FGL1</scope>
</reference>
<reference key="17">
    <citation type="journal article" date="2018" name="Nat. Immunol.">
        <title>LAG-3 inhibits the activation of CD4+ T cells that recognize stable pMHCII through its conformation-dependent recognition of pMHCII.</title>
        <authorList>
            <person name="Maruhashi T."/>
            <person name="Okazaki I.M."/>
            <person name="Sugiura D."/>
            <person name="Takahashi S."/>
            <person name="Maeda T.K."/>
            <person name="Shimizu K."/>
            <person name="Okazaki T."/>
        </authorList>
    </citation>
    <scope>INTERACTION WITH MHC-II</scope>
</reference>
<keyword id="KW-0002">3D-structure</keyword>
<keyword id="KW-1064">Adaptive immunity</keyword>
<keyword id="KW-1003">Cell membrane</keyword>
<keyword id="KW-1015">Disulfide bond</keyword>
<keyword id="KW-0325">Glycoprotein</keyword>
<keyword id="KW-0391">Immunity</keyword>
<keyword id="KW-0393">Immunoglobulin domain</keyword>
<keyword id="KW-0472">Membrane</keyword>
<keyword id="KW-1185">Reference proteome</keyword>
<keyword id="KW-0677">Repeat</keyword>
<keyword id="KW-0964">Secreted</keyword>
<keyword id="KW-0732">Signal</keyword>
<keyword id="KW-0812">Transmembrane</keyword>
<keyword id="KW-1133">Transmembrane helix</keyword>